<name>RL1D1_PONAB</name>
<feature type="chain" id="PRO_0000125845" description="Ribosomal L1 domain-containing protein 1">
    <location>
        <begin position="1"/>
        <end position="490"/>
    </location>
</feature>
<feature type="region of interest" description="Disordered" evidence="3">
    <location>
        <begin position="1"/>
        <end position="33"/>
    </location>
</feature>
<feature type="region of interest" description="Disordered" evidence="3">
    <location>
        <begin position="280"/>
        <end position="490"/>
    </location>
</feature>
<feature type="coiled-coil region" evidence="2">
    <location>
        <begin position="280"/>
        <end position="313"/>
    </location>
</feature>
<feature type="compositionally biased region" description="Low complexity" evidence="3">
    <location>
        <begin position="1"/>
        <end position="27"/>
    </location>
</feature>
<feature type="compositionally biased region" description="Basic residues" evidence="3">
    <location>
        <begin position="280"/>
        <end position="293"/>
    </location>
</feature>
<feature type="compositionally biased region" description="Basic and acidic residues" evidence="3">
    <location>
        <begin position="329"/>
        <end position="343"/>
    </location>
</feature>
<feature type="compositionally biased region" description="Basic residues" evidence="3">
    <location>
        <begin position="344"/>
        <end position="353"/>
    </location>
</feature>
<feature type="compositionally biased region" description="Basic and acidic residues" evidence="3">
    <location>
        <begin position="376"/>
        <end position="385"/>
    </location>
</feature>
<feature type="compositionally biased region" description="Basic and acidic residues" evidence="3">
    <location>
        <begin position="427"/>
        <end position="460"/>
    </location>
</feature>
<feature type="compositionally biased region" description="Basic residues" evidence="3">
    <location>
        <begin position="469"/>
        <end position="490"/>
    </location>
</feature>
<feature type="modified residue" description="N-acetylmethionine" evidence="1">
    <location>
        <position position="1"/>
    </location>
</feature>
<feature type="modified residue" description="Phosphothreonine" evidence="1">
    <location>
        <position position="340"/>
    </location>
</feature>
<feature type="modified residue" description="Phosphothreonine" evidence="1">
    <location>
        <position position="358"/>
    </location>
</feature>
<feature type="modified residue" description="Phosphoserine" evidence="1">
    <location>
        <position position="361"/>
    </location>
</feature>
<feature type="modified residue" description="Phosphothreonine" evidence="1">
    <location>
        <position position="375"/>
    </location>
</feature>
<feature type="modified residue" description="Phosphoserine" evidence="1">
    <location>
        <position position="392"/>
    </location>
</feature>
<feature type="modified residue" description="Phosphoserine" evidence="1">
    <location>
        <position position="396"/>
    </location>
</feature>
<feature type="modified residue" description="Phosphothreonine" evidence="1">
    <location>
        <position position="415"/>
    </location>
</feature>
<feature type="modified residue" description="Phosphothreonine" evidence="1">
    <location>
        <position position="423"/>
    </location>
</feature>
<feature type="modified residue" description="Phosphoserine" evidence="1">
    <location>
        <position position="427"/>
    </location>
</feature>
<feature type="modified residue" description="Phosphoserine" evidence="1">
    <location>
        <position position="443"/>
    </location>
</feature>
<feature type="modified residue" description="Phosphothreonine" evidence="1">
    <location>
        <position position="465"/>
    </location>
</feature>
<feature type="modified residue" description="N6-acetyllysine" evidence="1">
    <location>
        <position position="468"/>
    </location>
</feature>
<feature type="modified residue" description="Phosphoserine" evidence="1">
    <location>
        <position position="469"/>
    </location>
</feature>
<feature type="cross-link" description="Glycyl lysine isopeptide (Lys-Gly) (interchain with G-Cter in SUMO2)" evidence="1">
    <location>
        <position position="120"/>
    </location>
</feature>
<feature type="cross-link" description="Glycyl lysine isopeptide (Lys-Gly) (interchain with G-Cter in SUMO2)" evidence="1">
    <location>
        <position position="254"/>
    </location>
</feature>
<feature type="cross-link" description="Glycyl lysine isopeptide (Lys-Gly) (interchain with G-Cter in SUMO2)" evidence="1">
    <location>
        <position position="380"/>
    </location>
</feature>
<feature type="cross-link" description="Glycyl lysine isopeptide (Lys-Gly) (interchain with G-Cter in SUMO2)" evidence="1">
    <location>
        <position position="435"/>
    </location>
</feature>
<feature type="cross-link" description="Glycyl lysine isopeptide (Lys-Gly) (interchain with G-Cter in SUMO2)" evidence="1">
    <location>
        <position position="461"/>
    </location>
</feature>
<organism>
    <name type="scientific">Pongo abelii</name>
    <name type="common">Sumatran orangutan</name>
    <name type="synonym">Pongo pygmaeus abelii</name>
    <dbReference type="NCBI Taxonomy" id="9601"/>
    <lineage>
        <taxon>Eukaryota</taxon>
        <taxon>Metazoa</taxon>
        <taxon>Chordata</taxon>
        <taxon>Craniata</taxon>
        <taxon>Vertebrata</taxon>
        <taxon>Euteleostomi</taxon>
        <taxon>Mammalia</taxon>
        <taxon>Eutheria</taxon>
        <taxon>Euarchontoglires</taxon>
        <taxon>Primates</taxon>
        <taxon>Haplorrhini</taxon>
        <taxon>Catarrhini</taxon>
        <taxon>Hominidae</taxon>
        <taxon>Pongo</taxon>
    </lineage>
</organism>
<evidence type="ECO:0000250" key="1">
    <source>
        <dbReference type="UniProtKB" id="O76021"/>
    </source>
</evidence>
<evidence type="ECO:0000255" key="2"/>
<evidence type="ECO:0000256" key="3">
    <source>
        <dbReference type="SAM" id="MobiDB-lite"/>
    </source>
</evidence>
<evidence type="ECO:0000305" key="4"/>
<reference key="1">
    <citation type="submission" date="2004-11" db="EMBL/GenBank/DDBJ databases">
        <authorList>
            <consortium name="The German cDNA consortium"/>
        </authorList>
    </citation>
    <scope>NUCLEOTIDE SEQUENCE [LARGE SCALE MRNA]</scope>
    <source>
        <tissue>Heart</tissue>
    </source>
</reference>
<comment type="function">
    <text evidence="1">Regulates cellular senescence through inhibition of PTEN translation. Acts as a pro-apoptotic regulator in response to DNA damage.</text>
</comment>
<comment type="subunit">
    <text evidence="1">Interacts with ING1 (By similarity). Interacts with KPNA7 and KPNA2 (By similarity).</text>
</comment>
<comment type="subcellular location">
    <subcellularLocation>
        <location evidence="1">Nucleus</location>
        <location evidence="1">Nucleolus</location>
    </subcellularLocation>
</comment>
<comment type="similarity">
    <text evidence="4">Belongs to the universal ribosomal protein uL1 family. Highly divergent.</text>
</comment>
<protein>
    <recommendedName>
        <fullName>Ribosomal L1 domain-containing protein 1</fullName>
    </recommendedName>
</protein>
<sequence>MEDSASASLSSAAATGTSTSTPAAPTARKQLDKEQVRKAVDALLTHCKSRKNNYGLLLNENESLFLMVVLWKIPSKELRVRLTLPHSIRSDSEDICLFTKDEPNSTPEKTEQFYRKLLNKHGIKTVSQIISLQTLKKEYKSYEAKLRLLSSFDFFLTDARIRRLLPSLIGRHFYQRKKVPVSVNLLSKNLSREINDCIGGTVLNISKSGSCSAIRIGHVGMQIEHIIENIVAVTKGLSEKLPEKWESVKLLFVKTEKSAALPIFSSFVSNWDEATKRSLLNKKKKEARRKRRERNFEKQKERKKKRQQARKTASVLSKDDVAPESGDTTVKKPESKKEQTPEHGKKKRGRGKAQVKATNESEDEIPQLVPIGKKTPANEKVEIQKHATGKKSPAKSPNPSTPRGKKRKALPASETPKAAESETPGKSPEKKPKIKEEAVKEKSPSLGKKDARQTPKKPEAKFFTTPSKSVRKASHTPKKWPKKPKVPQST</sequence>
<dbReference type="EMBL" id="CR858325">
    <property type="protein sequence ID" value="CAH90561.1"/>
    <property type="molecule type" value="mRNA"/>
</dbReference>
<dbReference type="SMR" id="Q5RCE6"/>
<dbReference type="FunCoup" id="Q5RCE6">
    <property type="interactions" value="2113"/>
</dbReference>
<dbReference type="STRING" id="9601.ENSPPYP00000008041"/>
<dbReference type="eggNOG" id="KOG1685">
    <property type="taxonomic scope" value="Eukaryota"/>
</dbReference>
<dbReference type="InParanoid" id="Q5RCE6"/>
<dbReference type="OrthoDB" id="10251727at2759"/>
<dbReference type="Proteomes" id="UP000001595">
    <property type="component" value="Unplaced"/>
</dbReference>
<dbReference type="GO" id="GO:0005730">
    <property type="term" value="C:nucleolus"/>
    <property type="evidence" value="ECO:0000250"/>
    <property type="project" value="UniProtKB"/>
</dbReference>
<dbReference type="GO" id="GO:0042981">
    <property type="term" value="P:regulation of apoptotic process"/>
    <property type="evidence" value="ECO:0000250"/>
    <property type="project" value="UniProtKB"/>
</dbReference>
<dbReference type="GO" id="GO:2000772">
    <property type="term" value="P:regulation of cellular senescence"/>
    <property type="evidence" value="ECO:0000250"/>
    <property type="project" value="UniProtKB"/>
</dbReference>
<dbReference type="CDD" id="cd00403">
    <property type="entry name" value="Ribosomal_L1"/>
    <property type="match status" value="1"/>
</dbReference>
<dbReference type="FunFam" id="3.40.50.790:FF:000004">
    <property type="entry name" value="Ribosomal L1 domain-containing 1-like 1"/>
    <property type="match status" value="1"/>
</dbReference>
<dbReference type="Gene3D" id="3.30.190.20">
    <property type="match status" value="1"/>
</dbReference>
<dbReference type="Gene3D" id="3.40.50.790">
    <property type="match status" value="1"/>
</dbReference>
<dbReference type="InterPro" id="IPR023674">
    <property type="entry name" value="Ribosomal_uL1-like"/>
</dbReference>
<dbReference type="InterPro" id="IPR028364">
    <property type="entry name" value="Ribosomal_uL1/biogenesis"/>
</dbReference>
<dbReference type="InterPro" id="IPR016095">
    <property type="entry name" value="Ribosomal_uL1_3-a/b-sand"/>
</dbReference>
<dbReference type="Pfam" id="PF00687">
    <property type="entry name" value="Ribosomal_L1"/>
    <property type="match status" value="1"/>
</dbReference>
<dbReference type="SUPFAM" id="SSF56808">
    <property type="entry name" value="Ribosomal protein L1"/>
    <property type="match status" value="1"/>
</dbReference>
<accession>Q5RCE6</accession>
<keyword id="KW-0007">Acetylation</keyword>
<keyword id="KW-0175">Coiled coil</keyword>
<keyword id="KW-1017">Isopeptide bond</keyword>
<keyword id="KW-0539">Nucleus</keyword>
<keyword id="KW-0597">Phosphoprotein</keyword>
<keyword id="KW-1185">Reference proteome</keyword>
<keyword id="KW-0832">Ubl conjugation</keyword>
<gene>
    <name type="primary">RSL1D1</name>
</gene>
<proteinExistence type="evidence at transcript level"/>